<keyword id="KW-1185">Reference proteome</keyword>
<dbReference type="EMBL" id="AE003852">
    <property type="protein sequence ID" value="AAF95000.1"/>
    <property type="molecule type" value="Genomic_DNA"/>
</dbReference>
<dbReference type="PIR" id="E82150">
    <property type="entry name" value="E82150"/>
</dbReference>
<dbReference type="RefSeq" id="NP_231486.1">
    <property type="nucleotide sequence ID" value="NC_002505.1"/>
</dbReference>
<dbReference type="RefSeq" id="WP_001881606.1">
    <property type="nucleotide sequence ID" value="NZ_LT906614.1"/>
</dbReference>
<dbReference type="SMR" id="Q9KQZ5"/>
<dbReference type="STRING" id="243277.VC_1852"/>
<dbReference type="DNASU" id="2613606"/>
<dbReference type="EnsemblBacteria" id="AAF95000">
    <property type="protein sequence ID" value="AAF95000"/>
    <property type="gene ID" value="VC_1852"/>
</dbReference>
<dbReference type="KEGG" id="vch:VC_1852"/>
<dbReference type="PATRIC" id="fig|243277.26.peg.1768"/>
<dbReference type="eggNOG" id="COG3012">
    <property type="taxonomic scope" value="Bacteria"/>
</dbReference>
<dbReference type="HOGENOM" id="CLU_099590_0_0_6"/>
<dbReference type="Proteomes" id="UP000000584">
    <property type="component" value="Chromosome 1"/>
</dbReference>
<dbReference type="Gene3D" id="3.10.450.50">
    <property type="match status" value="1"/>
</dbReference>
<dbReference type="HAMAP" id="MF_00612">
    <property type="entry name" value="UPF0225"/>
    <property type="match status" value="1"/>
</dbReference>
<dbReference type="InterPro" id="IPR032710">
    <property type="entry name" value="NTF2-like_dom_sf"/>
</dbReference>
<dbReference type="InterPro" id="IPR004027">
    <property type="entry name" value="SEC_C_motif"/>
</dbReference>
<dbReference type="InterPro" id="IPR023006">
    <property type="entry name" value="UPF0225"/>
</dbReference>
<dbReference type="InterPro" id="IPR048469">
    <property type="entry name" value="YchJ-like_M"/>
</dbReference>
<dbReference type="NCBIfam" id="NF002449">
    <property type="entry name" value="PRK01617.1"/>
    <property type="match status" value="1"/>
</dbReference>
<dbReference type="NCBIfam" id="NF002592">
    <property type="entry name" value="PRK02250.1"/>
    <property type="match status" value="1"/>
</dbReference>
<dbReference type="PANTHER" id="PTHR33747:SF1">
    <property type="entry name" value="ADENYLATE CYCLASE-ASSOCIATED CAP C-TERMINAL DOMAIN-CONTAINING PROTEIN"/>
    <property type="match status" value="1"/>
</dbReference>
<dbReference type="PANTHER" id="PTHR33747">
    <property type="entry name" value="UPF0225 PROTEIN SCO1677"/>
    <property type="match status" value="1"/>
</dbReference>
<dbReference type="Pfam" id="PF02810">
    <property type="entry name" value="SEC-C"/>
    <property type="match status" value="1"/>
</dbReference>
<dbReference type="Pfam" id="PF17775">
    <property type="entry name" value="YchJ_M-like"/>
    <property type="match status" value="1"/>
</dbReference>
<dbReference type="SUPFAM" id="SSF54427">
    <property type="entry name" value="NTF2-like"/>
    <property type="match status" value="1"/>
</dbReference>
<dbReference type="SUPFAM" id="SSF103642">
    <property type="entry name" value="Sec-C motif"/>
    <property type="match status" value="1"/>
</dbReference>
<accession>Q9KQZ5</accession>
<protein>
    <recommendedName>
        <fullName evidence="1">UPF0225 protein VC_1852</fullName>
    </recommendedName>
</protein>
<sequence>MSCYCGNTQPYSQCCEPIHLNPHSAQVPEQLMRARFSAHILKNVEFVIETYHPSCQASNERDAISESVHSHWLRLEIISTQMGATPNEGFVHFKAFLDQEGKVFCLEERSRFLKENNCWFYIDGEFPAAIKQGRNDPCACGSGKKYKKCCG</sequence>
<proteinExistence type="inferred from homology"/>
<feature type="chain" id="PRO_0000071818" description="UPF0225 protein VC_1852">
    <location>
        <begin position="1"/>
        <end position="151"/>
    </location>
</feature>
<evidence type="ECO:0000255" key="1">
    <source>
        <dbReference type="HAMAP-Rule" id="MF_00612"/>
    </source>
</evidence>
<organism>
    <name type="scientific">Vibrio cholerae serotype O1 (strain ATCC 39315 / El Tor Inaba N16961)</name>
    <dbReference type="NCBI Taxonomy" id="243277"/>
    <lineage>
        <taxon>Bacteria</taxon>
        <taxon>Pseudomonadati</taxon>
        <taxon>Pseudomonadota</taxon>
        <taxon>Gammaproteobacteria</taxon>
        <taxon>Vibrionales</taxon>
        <taxon>Vibrionaceae</taxon>
        <taxon>Vibrio</taxon>
    </lineage>
</organism>
<comment type="similarity">
    <text evidence="1">Belongs to the UPF0225 family.</text>
</comment>
<name>Y1852_VIBCH</name>
<reference key="1">
    <citation type="journal article" date="2000" name="Nature">
        <title>DNA sequence of both chromosomes of the cholera pathogen Vibrio cholerae.</title>
        <authorList>
            <person name="Heidelberg J.F."/>
            <person name="Eisen J.A."/>
            <person name="Nelson W.C."/>
            <person name="Clayton R.A."/>
            <person name="Gwinn M.L."/>
            <person name="Dodson R.J."/>
            <person name="Haft D.H."/>
            <person name="Hickey E.K."/>
            <person name="Peterson J.D."/>
            <person name="Umayam L.A."/>
            <person name="Gill S.R."/>
            <person name="Nelson K.E."/>
            <person name="Read T.D."/>
            <person name="Tettelin H."/>
            <person name="Richardson D.L."/>
            <person name="Ermolaeva M.D."/>
            <person name="Vamathevan J.J."/>
            <person name="Bass S."/>
            <person name="Qin H."/>
            <person name="Dragoi I."/>
            <person name="Sellers P."/>
            <person name="McDonald L.A."/>
            <person name="Utterback T.R."/>
            <person name="Fleischmann R.D."/>
            <person name="Nierman W.C."/>
            <person name="White O."/>
            <person name="Salzberg S.L."/>
            <person name="Smith H.O."/>
            <person name="Colwell R.R."/>
            <person name="Mekalanos J.J."/>
            <person name="Venter J.C."/>
            <person name="Fraser C.M."/>
        </authorList>
    </citation>
    <scope>NUCLEOTIDE SEQUENCE [LARGE SCALE GENOMIC DNA]</scope>
    <source>
        <strain>ATCC 39315 / El Tor Inaba N16961</strain>
    </source>
</reference>
<gene>
    <name type="ordered locus">VC_1852</name>
</gene>